<sequence length="286" mass="30605">MAAPGPGAGAASGGASGGGAGAGGGASAGSGSSGVGGRLPSRVLELVFSYLELSELRSCALVCKHWYRCLHGDENSEVWRSLCARSLAEEALRTDILCNLPSYKAKVRAFQHAFSTNDCSRNVYIKKNGFTLHRNPIAQSTDGARTKIGFSEGRHAWEVWWEGPLGTVAVIGIATKRAPMQCQGYVALLGSDDQSWGWNLVDNNLLHNGEVNGSFPQCNNAPKYQIGERIRVILDMEDKTLAFERGYEFLGVAFRGLPKACLYPAVSAVYGNTEVTLVYLGKPLDG</sequence>
<proteinExistence type="evidence at protein level"/>
<reference evidence="9" key="1">
    <citation type="journal article" date="2004" name="Genome Res.">
        <title>The status, quality, and expansion of the NIH full-length cDNA project: the Mammalian Gene Collection (MGC).</title>
        <authorList>
            <consortium name="The MGC Project Team"/>
        </authorList>
    </citation>
    <scope>NUCLEOTIDE SEQUENCE [LARGE SCALE MRNA]</scope>
    <source>
        <strain evidence="11">C57BL/6J</strain>
        <strain evidence="9">FVB/N</strain>
        <tissue evidence="11">Brain</tissue>
        <tissue evidence="9">Mammary gland</tissue>
        <tissue evidence="10">Olfactory epithelium</tissue>
    </source>
</reference>
<reference key="2">
    <citation type="journal article" date="2009" name="Mol. Cell. Biol.">
        <title>Fbxo45 forms a novel ubiquitin ligase complex and is required for neuronal development.</title>
        <authorList>
            <person name="Saiga T."/>
            <person name="Fukuda T."/>
            <person name="Matsumoto M."/>
            <person name="Tada H."/>
            <person name="Okano H.J."/>
            <person name="Okano H."/>
            <person name="Nakayama K.I."/>
        </authorList>
    </citation>
    <scope>FUNCTION</scope>
    <scope>INTERACTION WITH MYCBP2 AND SKP1</scope>
    <scope>TISSUE SPECIFICITY</scope>
    <scope>DISRUPTION PHENOTYPE</scope>
    <scope>MUTAGENESIS OF ARG-42</scope>
</reference>
<reference key="3">
    <citation type="journal article" date="2010" name="J. Biol. Chem.">
        <title>Fbxo45, a novel ubiquitin ligase, regulates synaptic activity.</title>
        <authorList>
            <person name="Tada H."/>
            <person name="Okano H.J."/>
            <person name="Takagi H."/>
            <person name="Shibata S."/>
            <person name="Yao I."/>
            <person name="Matsumoto M."/>
            <person name="Saiga T."/>
            <person name="Nakayama K.I."/>
            <person name="Kashima H."/>
            <person name="Takahashi T."/>
            <person name="Setou M."/>
            <person name="Okano H."/>
        </authorList>
    </citation>
    <scope>TISSUE SPECIFICITY</scope>
    <scope>SUBCELLULAR LOCATION</scope>
    <scope>INTERACTION WITH SKP1</scope>
</reference>
<reference key="4">
    <citation type="journal article" date="2020" name="Mol. Cell. Biol.">
        <title>Fbxo45 Binds SPRY Motifs in the Extracellular Domain of N-Cadherin and Regulates Neuron Migration during Brain Development.</title>
        <authorList>
            <person name="Na Y."/>
            <person name="Calvo-Jimenez E."/>
            <person name="Kon E."/>
            <person name="Cao H."/>
            <person name="Jossin Y."/>
            <person name="Cooper J.A."/>
        </authorList>
    </citation>
    <scope>FUNCTION</scope>
</reference>
<dbReference type="EMBL" id="BC026799">
    <property type="protein sequence ID" value="AAH26799.1"/>
    <property type="molecule type" value="mRNA"/>
</dbReference>
<dbReference type="EMBL" id="BC088738">
    <property type="protein sequence ID" value="AAH88738.1"/>
    <property type="molecule type" value="mRNA"/>
</dbReference>
<dbReference type="EMBL" id="BC098203">
    <property type="protein sequence ID" value="AAH98203.1"/>
    <property type="molecule type" value="mRNA"/>
</dbReference>
<dbReference type="CCDS" id="CCDS28117.1"/>
<dbReference type="RefSeq" id="NP_775615.2">
    <property type="nucleotide sequence ID" value="NM_173439.2"/>
</dbReference>
<dbReference type="SMR" id="Q8K3B1"/>
<dbReference type="BioGRID" id="234572">
    <property type="interactions" value="5"/>
</dbReference>
<dbReference type="CORUM" id="Q8K3B1"/>
<dbReference type="FunCoup" id="Q8K3B1">
    <property type="interactions" value="841"/>
</dbReference>
<dbReference type="IntAct" id="Q8K3B1">
    <property type="interactions" value="2"/>
</dbReference>
<dbReference type="STRING" id="10090.ENSMUSP00000040168"/>
<dbReference type="PhosphoSitePlus" id="Q8K3B1"/>
<dbReference type="PaxDb" id="10090-ENSMUSP00000040168"/>
<dbReference type="PeptideAtlas" id="Q8K3B1"/>
<dbReference type="ProteomicsDB" id="267716"/>
<dbReference type="Pumba" id="Q8K3B1"/>
<dbReference type="Antibodypedia" id="51201">
    <property type="antibodies" value="61 antibodies from 15 providers"/>
</dbReference>
<dbReference type="DNASU" id="268882"/>
<dbReference type="Ensembl" id="ENSMUST00000042732.6">
    <property type="protein sequence ID" value="ENSMUSP00000040168.6"/>
    <property type="gene ID" value="ENSMUSG00000035764.6"/>
</dbReference>
<dbReference type="GeneID" id="268882"/>
<dbReference type="KEGG" id="mmu:268882"/>
<dbReference type="UCSC" id="uc007yyl.1">
    <property type="organism name" value="mouse"/>
</dbReference>
<dbReference type="AGR" id="MGI:2447775"/>
<dbReference type="CTD" id="200933"/>
<dbReference type="MGI" id="MGI:2447775">
    <property type="gene designation" value="Fbxo45"/>
</dbReference>
<dbReference type="VEuPathDB" id="HostDB:ENSMUSG00000035764"/>
<dbReference type="eggNOG" id="KOG3953">
    <property type="taxonomic scope" value="Eukaryota"/>
</dbReference>
<dbReference type="GeneTree" id="ENSGT01030000234629"/>
<dbReference type="HOGENOM" id="CLU_046756_1_0_1"/>
<dbReference type="InParanoid" id="Q8K3B1"/>
<dbReference type="OMA" id="ATKRASM"/>
<dbReference type="OrthoDB" id="2398163at2759"/>
<dbReference type="PhylomeDB" id="Q8K3B1"/>
<dbReference type="TreeFam" id="TF312822"/>
<dbReference type="UniPathway" id="UPA00143"/>
<dbReference type="BioGRID-ORCS" id="268882">
    <property type="hits" value="1 hit in 79 CRISPR screens"/>
</dbReference>
<dbReference type="ChiTaRS" id="Fbxo45">
    <property type="organism name" value="mouse"/>
</dbReference>
<dbReference type="PRO" id="PR:Q8K3B1"/>
<dbReference type="Proteomes" id="UP000000589">
    <property type="component" value="Chromosome 16"/>
</dbReference>
<dbReference type="RNAct" id="Q8K3B1">
    <property type="molecule type" value="protein"/>
</dbReference>
<dbReference type="Bgee" id="ENSMUSG00000035764">
    <property type="expression patterns" value="Expressed in metanephric ureteric bud and 267 other cell types or tissues"/>
</dbReference>
<dbReference type="GO" id="GO:0042995">
    <property type="term" value="C:cell projection"/>
    <property type="evidence" value="ECO:0007669"/>
    <property type="project" value="UniProtKB-KW"/>
</dbReference>
<dbReference type="GO" id="GO:0005576">
    <property type="term" value="C:extracellular region"/>
    <property type="evidence" value="ECO:0007669"/>
    <property type="project" value="UniProtKB-SubCell"/>
</dbReference>
<dbReference type="GO" id="GO:0098978">
    <property type="term" value="C:glutamatergic synapse"/>
    <property type="evidence" value="ECO:0000314"/>
    <property type="project" value="SynGO"/>
</dbReference>
<dbReference type="GO" id="GO:0005654">
    <property type="term" value="C:nucleoplasm"/>
    <property type="evidence" value="ECO:0007669"/>
    <property type="project" value="Ensembl"/>
</dbReference>
<dbReference type="GO" id="GO:0099524">
    <property type="term" value="C:postsynaptic cytosol"/>
    <property type="evidence" value="ECO:0000314"/>
    <property type="project" value="SynGO"/>
</dbReference>
<dbReference type="GO" id="GO:0014069">
    <property type="term" value="C:postsynaptic density"/>
    <property type="evidence" value="ECO:0000314"/>
    <property type="project" value="UniProtKB"/>
</dbReference>
<dbReference type="GO" id="GO:0045211">
    <property type="term" value="C:postsynaptic membrane"/>
    <property type="evidence" value="ECO:0007669"/>
    <property type="project" value="UniProtKB-SubCell"/>
</dbReference>
<dbReference type="GO" id="GO:0098793">
    <property type="term" value="C:presynapse"/>
    <property type="evidence" value="ECO:0000314"/>
    <property type="project" value="SynGO"/>
</dbReference>
<dbReference type="GO" id="GO:0099523">
    <property type="term" value="C:presynaptic cytosol"/>
    <property type="evidence" value="ECO:0000314"/>
    <property type="project" value="SynGO"/>
</dbReference>
<dbReference type="GO" id="GO:0042734">
    <property type="term" value="C:presynaptic membrane"/>
    <property type="evidence" value="ECO:0007669"/>
    <property type="project" value="UniProtKB-SubCell"/>
</dbReference>
<dbReference type="GO" id="GO:0045202">
    <property type="term" value="C:synapse"/>
    <property type="evidence" value="ECO:0000314"/>
    <property type="project" value="UniProtKB"/>
</dbReference>
<dbReference type="GO" id="GO:1990756">
    <property type="term" value="F:ubiquitin-like ligase-substrate adaptor activity"/>
    <property type="evidence" value="ECO:0007669"/>
    <property type="project" value="Ensembl"/>
</dbReference>
<dbReference type="GO" id="GO:0021960">
    <property type="term" value="P:anterior commissure morphogenesis"/>
    <property type="evidence" value="ECO:0000315"/>
    <property type="project" value="MGI"/>
</dbReference>
<dbReference type="GO" id="GO:0021799">
    <property type="term" value="P:cerebral cortex radially oriented cell migration"/>
    <property type="evidence" value="ECO:0000315"/>
    <property type="project" value="MGI"/>
</dbReference>
<dbReference type="GO" id="GO:0021800">
    <property type="term" value="P:cerebral cortex tangential migration"/>
    <property type="evidence" value="ECO:0000315"/>
    <property type="project" value="MGI"/>
</dbReference>
<dbReference type="GO" id="GO:0021957">
    <property type="term" value="P:corticospinal tract morphogenesis"/>
    <property type="evidence" value="ECO:0000315"/>
    <property type="project" value="MGI"/>
</dbReference>
<dbReference type="GO" id="GO:0006974">
    <property type="term" value="P:DNA damage response"/>
    <property type="evidence" value="ECO:0007669"/>
    <property type="project" value="Ensembl"/>
</dbReference>
<dbReference type="GO" id="GO:0060384">
    <property type="term" value="P:innervation"/>
    <property type="evidence" value="ECO:0000315"/>
    <property type="project" value="MGI"/>
</dbReference>
<dbReference type="GO" id="GO:0001764">
    <property type="term" value="P:neuron migration"/>
    <property type="evidence" value="ECO:0000315"/>
    <property type="project" value="MGI"/>
</dbReference>
<dbReference type="GO" id="GO:0043161">
    <property type="term" value="P:proteasome-mediated ubiquitin-dependent protein catabolic process"/>
    <property type="evidence" value="ECO:0000314"/>
    <property type="project" value="UniProtKB"/>
</dbReference>
<dbReference type="GO" id="GO:0070936">
    <property type="term" value="P:protein K48-linked ubiquitination"/>
    <property type="evidence" value="ECO:0007669"/>
    <property type="project" value="Ensembl"/>
</dbReference>
<dbReference type="GO" id="GO:0016567">
    <property type="term" value="P:protein ubiquitination"/>
    <property type="evidence" value="ECO:0000314"/>
    <property type="project" value="UniProtKB"/>
</dbReference>
<dbReference type="GO" id="GO:2000300">
    <property type="term" value="P:regulation of synaptic vesicle exocytosis"/>
    <property type="evidence" value="ECO:0000314"/>
    <property type="project" value="SynGO"/>
</dbReference>
<dbReference type="GO" id="GO:0060386">
    <property type="term" value="P:synapse assembly involved in innervation"/>
    <property type="evidence" value="ECO:0000315"/>
    <property type="project" value="MGI"/>
</dbReference>
<dbReference type="CDD" id="cd22111">
    <property type="entry name" value="F-box_FBXO45"/>
    <property type="match status" value="1"/>
</dbReference>
<dbReference type="CDD" id="cd12907">
    <property type="entry name" value="SPRY_Fbox"/>
    <property type="match status" value="1"/>
</dbReference>
<dbReference type="FunFam" id="1.20.1280.50:FF:000024">
    <property type="entry name" value="F-box/SPRY domain-containing protein 1"/>
    <property type="match status" value="1"/>
</dbReference>
<dbReference type="FunFam" id="2.60.120.920:FF:000017">
    <property type="entry name" value="F-box/SPRY domain-containing protein 1"/>
    <property type="match status" value="1"/>
</dbReference>
<dbReference type="Gene3D" id="1.20.1280.50">
    <property type="match status" value="1"/>
</dbReference>
<dbReference type="Gene3D" id="2.60.120.920">
    <property type="match status" value="1"/>
</dbReference>
<dbReference type="InterPro" id="IPR001870">
    <property type="entry name" value="B30.2/SPRY"/>
</dbReference>
<dbReference type="InterPro" id="IPR043136">
    <property type="entry name" value="B30.2/SPRY_sf"/>
</dbReference>
<dbReference type="InterPro" id="IPR013320">
    <property type="entry name" value="ConA-like_dom_sf"/>
</dbReference>
<dbReference type="InterPro" id="IPR036047">
    <property type="entry name" value="F-box-like_dom_sf"/>
</dbReference>
<dbReference type="InterPro" id="IPR001810">
    <property type="entry name" value="F-box_dom"/>
</dbReference>
<dbReference type="InterPro" id="IPR050672">
    <property type="entry name" value="FBXO45-Fsn/SPSB_families"/>
</dbReference>
<dbReference type="InterPro" id="IPR003877">
    <property type="entry name" value="SPRY_dom"/>
</dbReference>
<dbReference type="InterPro" id="IPR035784">
    <property type="entry name" value="SPRY_FBXO45"/>
</dbReference>
<dbReference type="PANTHER" id="PTHR12245:SF7">
    <property type="entry name" value="F-BOX_SPRY DOMAIN-CONTAINING PROTEIN 1"/>
    <property type="match status" value="1"/>
</dbReference>
<dbReference type="PANTHER" id="PTHR12245">
    <property type="entry name" value="SPRY DOMAIN CONTAINING SOCS BOX PROTEIN"/>
    <property type="match status" value="1"/>
</dbReference>
<dbReference type="Pfam" id="PF12937">
    <property type="entry name" value="F-box-like"/>
    <property type="match status" value="1"/>
</dbReference>
<dbReference type="Pfam" id="PF00622">
    <property type="entry name" value="SPRY"/>
    <property type="match status" value="1"/>
</dbReference>
<dbReference type="SMART" id="SM00256">
    <property type="entry name" value="FBOX"/>
    <property type="match status" value="1"/>
</dbReference>
<dbReference type="SMART" id="SM00449">
    <property type="entry name" value="SPRY"/>
    <property type="match status" value="1"/>
</dbReference>
<dbReference type="SUPFAM" id="SSF49899">
    <property type="entry name" value="Concanavalin A-like lectins/glucanases"/>
    <property type="match status" value="1"/>
</dbReference>
<dbReference type="SUPFAM" id="SSF81383">
    <property type="entry name" value="F-box domain"/>
    <property type="match status" value="1"/>
</dbReference>
<dbReference type="PROSITE" id="PS50188">
    <property type="entry name" value="B302_SPRY"/>
    <property type="match status" value="1"/>
</dbReference>
<dbReference type="PROSITE" id="PS50181">
    <property type="entry name" value="FBOX"/>
    <property type="match status" value="1"/>
</dbReference>
<gene>
    <name evidence="9 12" type="primary">Fbxo45</name>
</gene>
<keyword id="KW-0007">Acetylation</keyword>
<keyword id="KW-1003">Cell membrane</keyword>
<keyword id="KW-0966">Cell projection</keyword>
<keyword id="KW-0217">Developmental protein</keyword>
<keyword id="KW-0472">Membrane</keyword>
<keyword id="KW-0524">Neurogenesis</keyword>
<keyword id="KW-0539">Nucleus</keyword>
<keyword id="KW-0628">Postsynaptic cell membrane</keyword>
<keyword id="KW-1185">Reference proteome</keyword>
<keyword id="KW-0964">Secreted</keyword>
<keyword id="KW-0770">Synapse</keyword>
<keyword id="KW-0833">Ubl conjugation pathway</keyword>
<name>FBSP1_MOUSE</name>
<evidence type="ECO:0000250" key="1">
    <source>
        <dbReference type="UniProtKB" id="P0C2W1"/>
    </source>
</evidence>
<evidence type="ECO:0000250" key="2">
    <source>
        <dbReference type="UniProtKB" id="P0CH38"/>
    </source>
</evidence>
<evidence type="ECO:0000255" key="3">
    <source>
        <dbReference type="PROSITE-ProRule" id="PRU00080"/>
    </source>
</evidence>
<evidence type="ECO:0000255" key="4">
    <source>
        <dbReference type="PROSITE-ProRule" id="PRU00548"/>
    </source>
</evidence>
<evidence type="ECO:0000269" key="5">
    <source>
    </source>
</evidence>
<evidence type="ECO:0000269" key="6">
    <source>
    </source>
</evidence>
<evidence type="ECO:0000269" key="7">
    <source>
    </source>
</evidence>
<evidence type="ECO:0000305" key="8"/>
<evidence type="ECO:0000312" key="9">
    <source>
        <dbReference type="EMBL" id="AAH26799.1"/>
    </source>
</evidence>
<evidence type="ECO:0000312" key="10">
    <source>
        <dbReference type="EMBL" id="AAH88738.1"/>
    </source>
</evidence>
<evidence type="ECO:0000312" key="11">
    <source>
        <dbReference type="EMBL" id="AAH98203.1"/>
    </source>
</evidence>
<evidence type="ECO:0000312" key="12">
    <source>
        <dbReference type="MGI" id="MGI:2447775"/>
    </source>
</evidence>
<protein>
    <recommendedName>
        <fullName>F-box/SPRY domain-containing protein 1</fullName>
    </recommendedName>
    <alternativeName>
        <fullName>F-box only protein 45</fullName>
        <shortName>mFbxo45</shortName>
    </alternativeName>
</protein>
<comment type="function">
    <text evidence="1 5 7">Component of E3 ubiquitin ligase complex consisting of FBXO45, MYCBP2 and SKP1. Functions in substrate recognition but plays also an important role in assembly of the complex (By similarity). Required for normal neuromuscular synaptogenesis, axon pathfinding and neuronal migration (PubMed:32341084). Regulates neuron migration during brain development through interaction with N-cadherin/CDH2 after secretion via a non-classical mechanism (By similarity). Plays a role in the regulation of neurotransmission at mature neurons (By similarity). May control synaptic activity by controlling UNC13A via ubiquitin dependent pathway (By similarity). Specifically recognizes TP73, promoting its ubiquitination and degradation. Polyubiquitinates NMNAT2, an adenylyltransferase that acts as an axon maintenance factor, and regulates its stability and degradation by the proteasome. Acts also by ubiquitinating FBXW7 during prolonged mitotic arrest and promotes FBXW7 proteasomal degradation. Induces subsequently an increase in mitotic slippage and prevents mitotic cell death. In response to influenza infection, mediates interferon-lambda receptor IFNLR1 polyubiquitination and degradation through the ubiquitin-proteasome system by docking with its intracellular receptor domain (By similarity).</text>
</comment>
<comment type="pathway">
    <text>Protein modification; protein ubiquitination.</text>
</comment>
<comment type="subunit">
    <text evidence="1 5">Forms a complex with MYCBP2 and SKP1 (PubMed:19398581). Interacts with HEY1; leading to FBXO45 nuclear translocation. Interacts (via SPRY domain) with CDH2.</text>
</comment>
<comment type="subcellular location">
    <subcellularLocation>
        <location evidence="1">Secreted</location>
    </subcellularLocation>
    <subcellularLocation>
        <location evidence="2">Postsynaptic cell membrane</location>
    </subcellularLocation>
    <subcellularLocation>
        <location evidence="2">Presynaptic cell membrane</location>
    </subcellularLocation>
    <subcellularLocation>
        <location evidence="1">Nucleus</location>
    </subcellularLocation>
    <text evidence="1">Secreted by a non-classical mechanism.</text>
</comment>
<comment type="tissue specificity">
    <text evidence="5 6">Expressed speciffically in the central nervous system, including cerebellum, medulla oblongata, olfactory bulb, hippocampus, cortex and brain stem.</text>
</comment>
<comment type="disruption phenotype">
    <text evidence="5">Homozygous animals die soon after birth due to respiratory distress. Embryos show abnormal innervation of the diaphragm, impaired synapse formation at neuromuscular junctions, and aberrant development of axon fiber tracts in the brain.</text>
</comment>
<comment type="similarity">
    <text evidence="8">Belongs to the FBXO45/Fsn family.</text>
</comment>
<accession>Q8K3B1</accession>
<accession>Q5M7B1</accession>
<organism>
    <name type="scientific">Mus musculus</name>
    <name type="common">Mouse</name>
    <dbReference type="NCBI Taxonomy" id="10090"/>
    <lineage>
        <taxon>Eukaryota</taxon>
        <taxon>Metazoa</taxon>
        <taxon>Chordata</taxon>
        <taxon>Craniata</taxon>
        <taxon>Vertebrata</taxon>
        <taxon>Euteleostomi</taxon>
        <taxon>Mammalia</taxon>
        <taxon>Eutheria</taxon>
        <taxon>Euarchontoglires</taxon>
        <taxon>Glires</taxon>
        <taxon>Rodentia</taxon>
        <taxon>Myomorpha</taxon>
        <taxon>Muroidea</taxon>
        <taxon>Muridae</taxon>
        <taxon>Murinae</taxon>
        <taxon>Mus</taxon>
        <taxon>Mus</taxon>
    </lineage>
</organism>
<feature type="initiator methionine" description="Removed" evidence="1">
    <location>
        <position position="1"/>
    </location>
</feature>
<feature type="chain" id="PRO_0000119947" description="F-box/SPRY domain-containing protein 1">
    <location>
        <begin position="2"/>
        <end position="286"/>
    </location>
</feature>
<feature type="domain" description="F-box" evidence="3">
    <location>
        <begin position="33"/>
        <end position="82"/>
    </location>
</feature>
<feature type="domain" description="B30.2/SPRY" evidence="4">
    <location>
        <begin position="92"/>
        <end position="284"/>
    </location>
</feature>
<feature type="modified residue" description="N-acetylalanine" evidence="1">
    <location>
        <position position="2"/>
    </location>
</feature>
<feature type="mutagenesis site" description="Allows binding to CUL1 and RBX1 and formation of an authentic SCF (SKP1-CUL1-F-box protein) complex." evidence="5">
    <original>R</original>
    <variation>E</variation>
    <location>
        <position position="42"/>
    </location>
</feature>
<feature type="sequence conflict" description="In Ref. 1; AAH26799." evidence="8" ref="1">
    <original>S</original>
    <variation>C</variation>
    <location>
        <position position="27"/>
    </location>
</feature>